<geneLocation type="chloroplast"/>
<reference key="1">
    <citation type="submission" date="2007-03" db="EMBL/GenBank/DDBJ databases">
        <title>Sequencing analysis of Barbarea verna chloroplast DNA.</title>
        <authorList>
            <person name="Hosouchi T."/>
            <person name="Tsuruoka H."/>
            <person name="Kotani H."/>
        </authorList>
    </citation>
    <scope>NUCLEOTIDE SEQUENCE [LARGE SCALE GENOMIC DNA]</scope>
</reference>
<comment type="function">
    <text evidence="2">RuBisCO catalyzes two reactions: the carboxylation of D-ribulose 1,5-bisphosphate, the primary event in carbon dioxide fixation, as well as the oxidative fragmentation of the pentose substrate in the photorespiration process. Both reactions occur simultaneously and in competition at the same active site.</text>
</comment>
<comment type="catalytic activity">
    <reaction evidence="2">
        <text>2 (2R)-3-phosphoglycerate + 2 H(+) = D-ribulose 1,5-bisphosphate + CO2 + H2O</text>
        <dbReference type="Rhea" id="RHEA:23124"/>
        <dbReference type="ChEBI" id="CHEBI:15377"/>
        <dbReference type="ChEBI" id="CHEBI:15378"/>
        <dbReference type="ChEBI" id="CHEBI:16526"/>
        <dbReference type="ChEBI" id="CHEBI:57870"/>
        <dbReference type="ChEBI" id="CHEBI:58272"/>
        <dbReference type="EC" id="4.1.1.39"/>
    </reaction>
</comment>
<comment type="catalytic activity">
    <reaction evidence="2">
        <text>D-ribulose 1,5-bisphosphate + O2 = 2-phosphoglycolate + (2R)-3-phosphoglycerate + 2 H(+)</text>
        <dbReference type="Rhea" id="RHEA:36631"/>
        <dbReference type="ChEBI" id="CHEBI:15378"/>
        <dbReference type="ChEBI" id="CHEBI:15379"/>
        <dbReference type="ChEBI" id="CHEBI:57870"/>
        <dbReference type="ChEBI" id="CHEBI:58033"/>
        <dbReference type="ChEBI" id="CHEBI:58272"/>
    </reaction>
</comment>
<comment type="cofactor">
    <cofactor evidence="2">
        <name>Mg(2+)</name>
        <dbReference type="ChEBI" id="CHEBI:18420"/>
    </cofactor>
    <text evidence="2">Binds 1 Mg(2+) ion per subunit.</text>
</comment>
<comment type="subunit">
    <text evidence="2">Heterohexadecamer of 8 large chains and 8 small chains; disulfide-linked. The disulfide link is formed within the large subunit homodimers.</text>
</comment>
<comment type="subcellular location">
    <subcellularLocation>
        <location>Plastid</location>
        <location>Chloroplast</location>
    </subcellularLocation>
</comment>
<comment type="PTM">
    <text evidence="2">The disulfide bond which can form in the large chain dimeric partners within the hexadecamer appears to be associated with oxidative stress and protein turnover.</text>
</comment>
<comment type="miscellaneous">
    <text evidence="2">The basic functional RuBisCO is composed of a large chain homodimer in a 'head-to-tail' conformation. In form I RuBisCO this homodimer is arranged in a barrel-like tetramer with the small subunits forming a tetrameric 'cap' on each end of the 'barrel'.</text>
</comment>
<comment type="similarity">
    <text evidence="2">Belongs to the RuBisCO large chain family. Type I subfamily.</text>
</comment>
<sequence>MSPQTETKASVGFKAGVKEYKLTYYTPEYETKDTDILAAFRVTPQPGVPPEEAGAAVAAESSTGTWTTVWTDGLTSLDRYKGRCYHIEPVPGEETQFIAYVAYPLDLFEEGSVTNMFTSIVGNVFGFKALAALRLEDLRIPPAYTKTFQGPPHGIQVERDKLNKYGRPLLGCTIKPKLGLSAKNYGRAVYECLRGGLDFTKDDENVNSQPFMRWRDRFLFCAEAIYKSQAETGEIKGHYLNATAGTCEEMIKRAVFARELGVRIVMHDYLTGGFTANTSLAHYCRDNGLLLHIHRAMHAVIDRQKNHGMHFRVLAKALRLSGGDHIHAGTVVGKLEGDRESTLGFVDLLRDDYVEKDRSRGIFFTQDWVSLPGVLPVASGGIHVWHMPALTEIFGDDSVLQFGGGTLGHPWGNAPGAVANRVALEACVQARNEGRDLAIEGNEIIREACKWSPELAAACEVWKEIRFNFPTIDKLDGQA</sequence>
<accession>A4QKB3</accession>
<proteinExistence type="inferred from homology"/>
<name>RBL_BARVE</name>
<gene>
    <name evidence="2" type="primary">rbcL</name>
</gene>
<evidence type="ECO:0000250" key="1">
    <source>
        <dbReference type="UniProtKB" id="O03042"/>
    </source>
</evidence>
<evidence type="ECO:0000255" key="2">
    <source>
        <dbReference type="HAMAP-Rule" id="MF_01338"/>
    </source>
</evidence>
<dbReference type="EC" id="4.1.1.39" evidence="2"/>
<dbReference type="EMBL" id="AP009370">
    <property type="protein sequence ID" value="BAF50118.1"/>
    <property type="molecule type" value="Genomic_DNA"/>
</dbReference>
<dbReference type="RefSeq" id="YP_001123294.1">
    <property type="nucleotide sequence ID" value="NC_009269.1"/>
</dbReference>
<dbReference type="SMR" id="A4QKB3"/>
<dbReference type="GeneID" id="4961828"/>
<dbReference type="GO" id="GO:0009507">
    <property type="term" value="C:chloroplast"/>
    <property type="evidence" value="ECO:0007669"/>
    <property type="project" value="UniProtKB-SubCell"/>
</dbReference>
<dbReference type="GO" id="GO:0000287">
    <property type="term" value="F:magnesium ion binding"/>
    <property type="evidence" value="ECO:0007669"/>
    <property type="project" value="UniProtKB-UniRule"/>
</dbReference>
<dbReference type="GO" id="GO:0004497">
    <property type="term" value="F:monooxygenase activity"/>
    <property type="evidence" value="ECO:0007669"/>
    <property type="project" value="UniProtKB-KW"/>
</dbReference>
<dbReference type="GO" id="GO:0016984">
    <property type="term" value="F:ribulose-bisphosphate carboxylase activity"/>
    <property type="evidence" value="ECO:0007669"/>
    <property type="project" value="UniProtKB-UniRule"/>
</dbReference>
<dbReference type="GO" id="GO:0009853">
    <property type="term" value="P:photorespiration"/>
    <property type="evidence" value="ECO:0007669"/>
    <property type="project" value="UniProtKB-KW"/>
</dbReference>
<dbReference type="GO" id="GO:0019253">
    <property type="term" value="P:reductive pentose-phosphate cycle"/>
    <property type="evidence" value="ECO:0007669"/>
    <property type="project" value="UniProtKB-UniRule"/>
</dbReference>
<dbReference type="CDD" id="cd08212">
    <property type="entry name" value="RuBisCO_large_I"/>
    <property type="match status" value="1"/>
</dbReference>
<dbReference type="FunFam" id="3.20.20.110:FF:000001">
    <property type="entry name" value="Ribulose bisphosphate carboxylase large chain"/>
    <property type="match status" value="1"/>
</dbReference>
<dbReference type="FunFam" id="3.30.70.150:FF:000001">
    <property type="entry name" value="Ribulose bisphosphate carboxylase large chain"/>
    <property type="match status" value="1"/>
</dbReference>
<dbReference type="Gene3D" id="3.20.20.110">
    <property type="entry name" value="Ribulose bisphosphate carboxylase, large subunit, C-terminal domain"/>
    <property type="match status" value="1"/>
</dbReference>
<dbReference type="Gene3D" id="3.30.70.150">
    <property type="entry name" value="RuBisCO large subunit, N-terminal domain"/>
    <property type="match status" value="1"/>
</dbReference>
<dbReference type="HAMAP" id="MF_01338">
    <property type="entry name" value="RuBisCO_L_type1"/>
    <property type="match status" value="1"/>
</dbReference>
<dbReference type="InterPro" id="IPR033966">
    <property type="entry name" value="RuBisCO"/>
</dbReference>
<dbReference type="InterPro" id="IPR020878">
    <property type="entry name" value="RuBisCo_large_chain_AS"/>
</dbReference>
<dbReference type="InterPro" id="IPR000685">
    <property type="entry name" value="RuBisCO_lsu_C"/>
</dbReference>
<dbReference type="InterPro" id="IPR036376">
    <property type="entry name" value="RuBisCO_lsu_C_sf"/>
</dbReference>
<dbReference type="InterPro" id="IPR017443">
    <property type="entry name" value="RuBisCO_lsu_fd_N"/>
</dbReference>
<dbReference type="InterPro" id="IPR036422">
    <property type="entry name" value="RuBisCO_lsu_N_sf"/>
</dbReference>
<dbReference type="InterPro" id="IPR020888">
    <property type="entry name" value="RuBisCO_lsuI"/>
</dbReference>
<dbReference type="NCBIfam" id="NF003252">
    <property type="entry name" value="PRK04208.1"/>
    <property type="match status" value="1"/>
</dbReference>
<dbReference type="PANTHER" id="PTHR42704">
    <property type="entry name" value="RIBULOSE BISPHOSPHATE CARBOXYLASE"/>
    <property type="match status" value="1"/>
</dbReference>
<dbReference type="PANTHER" id="PTHR42704:SF16">
    <property type="entry name" value="RIBULOSE BISPHOSPHATE CARBOXYLASE LARGE CHAIN"/>
    <property type="match status" value="1"/>
</dbReference>
<dbReference type="Pfam" id="PF00016">
    <property type="entry name" value="RuBisCO_large"/>
    <property type="match status" value="1"/>
</dbReference>
<dbReference type="Pfam" id="PF02788">
    <property type="entry name" value="RuBisCO_large_N"/>
    <property type="match status" value="1"/>
</dbReference>
<dbReference type="SFLD" id="SFLDG01052">
    <property type="entry name" value="RuBisCO"/>
    <property type="match status" value="1"/>
</dbReference>
<dbReference type="SFLD" id="SFLDS00014">
    <property type="entry name" value="RuBisCO"/>
    <property type="match status" value="1"/>
</dbReference>
<dbReference type="SFLD" id="SFLDG00301">
    <property type="entry name" value="RuBisCO-like_proteins"/>
    <property type="match status" value="1"/>
</dbReference>
<dbReference type="SUPFAM" id="SSF51649">
    <property type="entry name" value="RuBisCo, C-terminal domain"/>
    <property type="match status" value="1"/>
</dbReference>
<dbReference type="SUPFAM" id="SSF54966">
    <property type="entry name" value="RuBisCO, large subunit, small (N-terminal) domain"/>
    <property type="match status" value="1"/>
</dbReference>
<dbReference type="PROSITE" id="PS00157">
    <property type="entry name" value="RUBISCO_LARGE"/>
    <property type="match status" value="1"/>
</dbReference>
<organism>
    <name type="scientific">Barbarea verna</name>
    <name type="common">Land cress</name>
    <name type="synonym">Erysimum vernum</name>
    <dbReference type="NCBI Taxonomy" id="50458"/>
    <lineage>
        <taxon>Eukaryota</taxon>
        <taxon>Viridiplantae</taxon>
        <taxon>Streptophyta</taxon>
        <taxon>Embryophyta</taxon>
        <taxon>Tracheophyta</taxon>
        <taxon>Spermatophyta</taxon>
        <taxon>Magnoliopsida</taxon>
        <taxon>eudicotyledons</taxon>
        <taxon>Gunneridae</taxon>
        <taxon>Pentapetalae</taxon>
        <taxon>rosids</taxon>
        <taxon>malvids</taxon>
        <taxon>Brassicales</taxon>
        <taxon>Brassicaceae</taxon>
        <taxon>Cardamineae</taxon>
        <taxon>Barbarea</taxon>
    </lineage>
</organism>
<keyword id="KW-0113">Calvin cycle</keyword>
<keyword id="KW-0120">Carbon dioxide fixation</keyword>
<keyword id="KW-0150">Chloroplast</keyword>
<keyword id="KW-1015">Disulfide bond</keyword>
<keyword id="KW-0456">Lyase</keyword>
<keyword id="KW-0460">Magnesium</keyword>
<keyword id="KW-0479">Metal-binding</keyword>
<keyword id="KW-0503">Monooxygenase</keyword>
<keyword id="KW-0560">Oxidoreductase</keyword>
<keyword id="KW-0597">Phosphoprotein</keyword>
<keyword id="KW-0601">Photorespiration</keyword>
<keyword id="KW-0602">Photosynthesis</keyword>
<keyword id="KW-0934">Plastid</keyword>
<protein>
    <recommendedName>
        <fullName evidence="2">Ribulose bisphosphate carboxylase large chain</fullName>
        <shortName evidence="2">RuBisCO large subunit</shortName>
        <ecNumber evidence="2">4.1.1.39</ecNumber>
    </recommendedName>
</protein>
<feature type="propeptide" id="PRO_0000299985" evidence="2">
    <location>
        <begin position="1"/>
        <end position="2"/>
    </location>
</feature>
<feature type="chain" id="PRO_0000299986" description="Ribulose bisphosphate carboxylase large chain">
    <location>
        <begin position="3"/>
        <end position="479"/>
    </location>
</feature>
<feature type="active site" description="Proton acceptor" evidence="2">
    <location>
        <position position="175"/>
    </location>
</feature>
<feature type="active site" description="Proton acceptor" evidence="2">
    <location>
        <position position="294"/>
    </location>
</feature>
<feature type="binding site" description="in homodimeric partner" evidence="2">
    <location>
        <position position="123"/>
    </location>
    <ligand>
        <name>substrate</name>
    </ligand>
</feature>
<feature type="binding site" evidence="2">
    <location>
        <position position="173"/>
    </location>
    <ligand>
        <name>substrate</name>
    </ligand>
</feature>
<feature type="binding site" evidence="2">
    <location>
        <position position="177"/>
    </location>
    <ligand>
        <name>substrate</name>
    </ligand>
</feature>
<feature type="binding site" description="via carbamate group" evidence="2">
    <location>
        <position position="201"/>
    </location>
    <ligand>
        <name>Mg(2+)</name>
        <dbReference type="ChEBI" id="CHEBI:18420"/>
    </ligand>
</feature>
<feature type="binding site" evidence="2">
    <location>
        <position position="203"/>
    </location>
    <ligand>
        <name>Mg(2+)</name>
        <dbReference type="ChEBI" id="CHEBI:18420"/>
    </ligand>
</feature>
<feature type="binding site" evidence="2">
    <location>
        <position position="204"/>
    </location>
    <ligand>
        <name>Mg(2+)</name>
        <dbReference type="ChEBI" id="CHEBI:18420"/>
    </ligand>
</feature>
<feature type="binding site" evidence="2">
    <location>
        <position position="295"/>
    </location>
    <ligand>
        <name>substrate</name>
    </ligand>
</feature>
<feature type="binding site" evidence="2">
    <location>
        <position position="327"/>
    </location>
    <ligand>
        <name>substrate</name>
    </ligand>
</feature>
<feature type="binding site" evidence="2">
    <location>
        <position position="379"/>
    </location>
    <ligand>
        <name>substrate</name>
    </ligand>
</feature>
<feature type="site" description="Transition state stabilizer" evidence="2">
    <location>
        <position position="334"/>
    </location>
</feature>
<feature type="modified residue" description="N6-carboxylysine" evidence="2">
    <location>
        <position position="201"/>
    </location>
</feature>
<feature type="modified residue" description="Phosphoserine" evidence="1">
    <location>
        <position position="208"/>
    </location>
</feature>
<feature type="modified residue" description="Phosphothreonine" evidence="1">
    <location>
        <position position="330"/>
    </location>
</feature>
<feature type="disulfide bond" description="Interchain; in linked form" evidence="2">
    <location>
        <position position="247"/>
    </location>
</feature>